<protein>
    <recommendedName>
        <fullName evidence="2">Fructose-1,6-bisphosphate aldolase/phosphatase</fullName>
        <shortName evidence="2">FBP A/P</shortName>
        <shortName evidence="2">FBP aldolase/phosphatase</shortName>
        <ecNumber evidence="2 3">3.1.3.11</ecNumber>
        <ecNumber evidence="2">4.1.2.13</ecNumber>
    </recommendedName>
</protein>
<accession>B6YTP6</accession>
<comment type="function">
    <text evidence="2 3">Catalyzes two subsequent steps in gluconeogenesis: the aldol condensation of dihydroxyacetone phosphate (DHAP) and glyceraldehyde-3-phosphate (GA3P) to fructose-1,6-bisphosphate (FBP), and the dephosphorylation of FBP to fructose-6-phosphate (F6P) (By similarity). Can also dephosphorylate, with lower activity, other related substrates including fructose-1-phosphate, fructose-6-phosphate, glucose-1-phosphate, glucose-6-phosphate, glycerol-2-phosphate, phosphoenolpyruvate, 5'-AMP, 6'-ADP and 7'-ATP (PubMed:21221938).</text>
</comment>
<comment type="catalytic activity">
    <reaction evidence="2">
        <text>beta-D-fructose 1,6-bisphosphate = D-glyceraldehyde 3-phosphate + dihydroxyacetone phosphate</text>
        <dbReference type="Rhea" id="RHEA:14729"/>
        <dbReference type="ChEBI" id="CHEBI:32966"/>
        <dbReference type="ChEBI" id="CHEBI:57642"/>
        <dbReference type="ChEBI" id="CHEBI:59776"/>
        <dbReference type="EC" id="4.1.2.13"/>
    </reaction>
</comment>
<comment type="catalytic activity">
    <reaction evidence="2 3">
        <text>beta-D-fructose 1,6-bisphosphate + H2O = beta-D-fructose 6-phosphate + phosphate</text>
        <dbReference type="Rhea" id="RHEA:11064"/>
        <dbReference type="ChEBI" id="CHEBI:15377"/>
        <dbReference type="ChEBI" id="CHEBI:32966"/>
        <dbReference type="ChEBI" id="CHEBI:43474"/>
        <dbReference type="ChEBI" id="CHEBI:57634"/>
        <dbReference type="EC" id="3.1.3.11"/>
    </reaction>
</comment>
<comment type="cofactor">
    <cofactor evidence="2 3">
        <name>Mg(2+)</name>
        <dbReference type="ChEBI" id="CHEBI:18420"/>
    </cofactor>
</comment>
<comment type="activity regulation">
    <text evidence="3">FBPase activity is inhibited by Ca(2+), ATP, ADP and phosphoenolpyruvate.</text>
</comment>
<comment type="biophysicochemical properties">
    <kinetics>
        <KM evidence="3">0.235 mM for FBP</KM>
        <text evidence="3">kcat is 14.84 sec(-1) for the FBPase activity (at 95 degrees Celsius).</text>
    </kinetics>
    <phDependence>
        <text evidence="3">Optimum pH is 8.0.</text>
    </phDependence>
    <temperatureDependence>
        <text evidence="3">Optimum temperature is 95 degrees Celsius.</text>
    </temperatureDependence>
</comment>
<comment type="pathway">
    <text evidence="2">Carbohydrate biosynthesis; gluconeogenesis.</text>
</comment>
<comment type="subunit">
    <text evidence="2 3">Homooctamer; dimer of tetramers.</text>
</comment>
<comment type="domain">
    <text evidence="2">Consists of a single catalytic domain, but remodels its active-site architecture via a large structural change to exhibit dual activities.</text>
</comment>
<comment type="similarity">
    <text evidence="2">Belongs to the FBP aldolase/phosphatase family.</text>
</comment>
<sequence>MAIGEKITISVIKADIGGWPGHSRVHPQLIEAAEEVLAKAKEEGTIIDFYVAYAGDDLQLIMTHKKGVDSPDIHGLAWKAFEEATEIAKEFGLYGAGQDLLKDAFSGNIRGMGPGIAEMEITLRKSEPIVTFHMDKTEPGAFNLPIFRMFADPFNTAGLVIDPNMHMGFRFEVWDIKEHKRVILNTPEEIYDLLALIGAKSRYVIKRVYPKEGHKISKDEPVAVISTEKLYEIAGEYVGKDDPVAIVRAQSGLPALGEVLEPFAFPHLVSGWMRGSHNGPIMPVPMHQANPTRFDGPPRVVALGWQISPEGKLVGPVDLFDDPAFDYARQKALEITEYIRRHGPFEPHRLPLEDMEYTTLPGVLKKLEERFEDIE</sequence>
<feature type="chain" id="PRO_0000442431" description="Fructose-1,6-bisphosphate aldolase/phosphatase">
    <location>
        <begin position="1"/>
        <end position="375"/>
    </location>
</feature>
<feature type="active site" description="Proton acceptor; for FBP phosphatase activity" evidence="2">
    <location>
        <position position="15"/>
    </location>
</feature>
<feature type="active site" description="Proton donor/acceptor; for FBP aldolase activity" evidence="2">
    <location>
        <position position="237"/>
    </location>
</feature>
<feature type="active site" description="Schiff-base intermediate with DHAP; for FBP aldolase activity" evidence="2">
    <location>
        <position position="240"/>
    </location>
</feature>
<feature type="binding site" evidence="2">
    <location>
        <position position="15"/>
    </location>
    <ligand>
        <name>Mg(2+)</name>
        <dbReference type="ChEBI" id="CHEBI:18420"/>
        <label>1</label>
    </ligand>
</feature>
<feature type="binding site" description="in other chain" evidence="1">
    <location>
        <position position="22"/>
    </location>
    <ligand>
        <name>beta-D-fructose 1,6-bisphosphate</name>
        <dbReference type="ChEBI" id="CHEBI:32966"/>
        <note>ligand shared between dimeric partners</note>
    </ligand>
</feature>
<feature type="binding site" evidence="1">
    <location>
        <position position="22"/>
    </location>
    <ligand>
        <name>dihydroxyacetone phosphate</name>
        <dbReference type="ChEBI" id="CHEBI:57642"/>
    </ligand>
</feature>
<feature type="binding site" evidence="2">
    <location>
        <position position="22"/>
    </location>
    <ligand>
        <name>Mg(2+)</name>
        <dbReference type="ChEBI" id="CHEBI:18420"/>
        <label>1</label>
    </ligand>
</feature>
<feature type="binding site" evidence="2">
    <location>
        <position position="56"/>
    </location>
    <ligand>
        <name>Mg(2+)</name>
        <dbReference type="ChEBI" id="CHEBI:18420"/>
        <label>1</label>
    </ligand>
</feature>
<feature type="binding site" evidence="2">
    <location>
        <position position="56"/>
    </location>
    <ligand>
        <name>Mg(2+)</name>
        <dbReference type="ChEBI" id="CHEBI:18420"/>
        <label>2</label>
    </ligand>
</feature>
<feature type="binding site" evidence="2">
    <location>
        <position position="57"/>
    </location>
    <ligand>
        <name>Mg(2+)</name>
        <dbReference type="ChEBI" id="CHEBI:18420"/>
        <label>2</label>
    </ligand>
</feature>
<feature type="binding site" description="in other chain" evidence="1">
    <location>
        <position position="94"/>
    </location>
    <ligand>
        <name>beta-D-fructose 1,6-bisphosphate</name>
        <dbReference type="ChEBI" id="CHEBI:32966"/>
        <note>ligand shared between dimeric partners</note>
    </ligand>
</feature>
<feature type="binding site" evidence="2">
    <location>
        <position position="98"/>
    </location>
    <ligand>
        <name>Mg(2+)</name>
        <dbReference type="ChEBI" id="CHEBI:18420"/>
        <label>1</label>
    </ligand>
</feature>
<feature type="binding site" description="in other chain" evidence="2">
    <location>
        <begin position="107"/>
        <end position="108"/>
    </location>
    <ligand>
        <name>beta-D-fructose 1,6-bisphosphate</name>
        <dbReference type="ChEBI" id="CHEBI:32966"/>
        <note>ligand shared between dimeric partners</note>
    </ligand>
</feature>
<feature type="binding site" evidence="2">
    <location>
        <position position="135"/>
    </location>
    <ligand>
        <name>Mg(2+)</name>
        <dbReference type="ChEBI" id="CHEBI:18420"/>
        <label>2</label>
    </ligand>
</feature>
<feature type="binding site" description="in other chain" evidence="1">
    <location>
        <position position="136"/>
    </location>
    <ligand>
        <name>beta-D-fructose 1,6-bisphosphate</name>
        <dbReference type="ChEBI" id="CHEBI:32966"/>
        <note>ligand shared between dimeric partners</note>
    </ligand>
</feature>
<feature type="binding site" evidence="1">
    <location>
        <position position="136"/>
    </location>
    <ligand>
        <name>dihydroxyacetone phosphate</name>
        <dbReference type="ChEBI" id="CHEBI:57642"/>
    </ligand>
</feature>
<feature type="binding site" evidence="2">
    <location>
        <position position="240"/>
    </location>
    <ligand>
        <name>Mg(2+)</name>
        <dbReference type="ChEBI" id="CHEBI:18420"/>
        <label>3</label>
    </ligand>
</feature>
<feature type="binding site" evidence="2">
    <location>
        <position position="241"/>
    </location>
    <ligand>
        <name>Mg(2+)</name>
        <dbReference type="ChEBI" id="CHEBI:18420"/>
        <label>3</label>
    </ligand>
</feature>
<feature type="binding site" evidence="2">
    <location>
        <position position="241"/>
    </location>
    <ligand>
        <name>Mg(2+)</name>
        <dbReference type="ChEBI" id="CHEBI:18420"/>
        <label>4</label>
    </ligand>
</feature>
<feature type="binding site" evidence="2">
    <location>
        <position position="242"/>
    </location>
    <ligand>
        <name>Mg(2+)</name>
        <dbReference type="ChEBI" id="CHEBI:18420"/>
        <label>2</label>
    </ligand>
</feature>
<feature type="binding site" evidence="2">
    <location>
        <position position="242"/>
    </location>
    <ligand>
        <name>Mg(2+)</name>
        <dbReference type="ChEBI" id="CHEBI:18420"/>
        <label>3</label>
    </ligand>
</feature>
<feature type="binding site" evidence="2">
    <location>
        <begin position="250"/>
        <end position="251"/>
    </location>
    <ligand>
        <name>beta-D-fructose 1,6-bisphosphate</name>
        <dbReference type="ChEBI" id="CHEBI:32966"/>
        <note>ligand shared between dimeric partners</note>
    </ligand>
</feature>
<feature type="binding site" description="in other chain" evidence="1">
    <location>
        <position position="274"/>
    </location>
    <ligand>
        <name>beta-D-fructose 1,6-bisphosphate</name>
        <dbReference type="ChEBI" id="CHEBI:32966"/>
        <note>ligand shared between dimeric partners</note>
    </ligand>
</feature>
<feature type="binding site" evidence="1">
    <location>
        <position position="274"/>
    </location>
    <ligand>
        <name>dihydroxyacetone phosphate</name>
        <dbReference type="ChEBI" id="CHEBI:57642"/>
    </ligand>
</feature>
<feature type="binding site" description="in other chain" evidence="1">
    <location>
        <position position="295"/>
    </location>
    <ligand>
        <name>beta-D-fructose 1,6-bisphosphate</name>
        <dbReference type="ChEBI" id="CHEBI:32966"/>
        <note>ligand shared between dimeric partners</note>
    </ligand>
</feature>
<feature type="binding site" evidence="1">
    <location>
        <position position="295"/>
    </location>
    <ligand>
        <name>dihydroxyacetone phosphate</name>
        <dbReference type="ChEBI" id="CHEBI:57642"/>
    </ligand>
</feature>
<feature type="binding site" description="in other chain" evidence="1">
    <location>
        <position position="357"/>
    </location>
    <ligand>
        <name>beta-D-fructose 1,6-bisphosphate</name>
        <dbReference type="ChEBI" id="CHEBI:32966"/>
        <note>ligand shared between dimeric partners</note>
    </ligand>
</feature>
<proteinExistence type="evidence at protein level"/>
<evidence type="ECO:0000250" key="1">
    <source>
        <dbReference type="UniProtKB" id="F9VMT6"/>
    </source>
</evidence>
<evidence type="ECO:0000255" key="2">
    <source>
        <dbReference type="HAMAP-Rule" id="MF_02067"/>
    </source>
</evidence>
<evidence type="ECO:0000269" key="3">
    <source>
    </source>
</evidence>
<evidence type="ECO:0000312" key="4">
    <source>
        <dbReference type="EMBL" id="ACJ16987.1"/>
    </source>
</evidence>
<name>FBPAP_THEON</name>
<reference key="1">
    <citation type="journal article" date="2008" name="J. Bacteriol.">
        <title>The complete genome sequence of Thermococcus onnurineus NA1 reveals a mixed heterotrophic and carboxydotrophic metabolism.</title>
        <authorList>
            <person name="Lee H.S."/>
            <person name="Kang S.G."/>
            <person name="Bae S.S."/>
            <person name="Lim J.K."/>
            <person name="Cho Y."/>
            <person name="Kim Y.J."/>
            <person name="Jeon J.H."/>
            <person name="Cha S.-S."/>
            <person name="Kwon K.K."/>
            <person name="Kim H.-T."/>
            <person name="Park C.-J."/>
            <person name="Lee H.-W."/>
            <person name="Kim S.I."/>
            <person name="Chun J."/>
            <person name="Colwell R.R."/>
            <person name="Kim S.-J."/>
            <person name="Lee J.-H."/>
        </authorList>
    </citation>
    <scope>NUCLEOTIDE SEQUENCE [LARGE SCALE GENOMIC DNA]</scope>
    <source>
        <strain>NA1</strain>
    </source>
</reference>
<reference key="2">
    <citation type="journal article" date="2010" name="J. Microbiol.">
        <title>Characterization of hyperthermostable fructose-1,6-bisphosphatase from Thermococcus onnurineus NA1.</title>
        <authorList>
            <person name="Lee Y.G."/>
            <person name="Kang S.G."/>
            <person name="Lee J.H."/>
            <person name="Kim S.I."/>
            <person name="Chung Y.H."/>
        </authorList>
    </citation>
    <scope>FUNCTION AS A FBPASE</scope>
    <scope>CATALYTIC ACTIVITY</scope>
    <scope>COFACTOR</scope>
    <scope>ACTIVITY REGULATION</scope>
    <scope>BIOPHYSICOCHEMICAL PROPERTIES</scope>
    <scope>SUBUNIT</scope>
    <source>
        <strain>NA1</strain>
    </source>
</reference>
<organism>
    <name type="scientific">Thermococcus onnurineus (strain NA1)</name>
    <dbReference type="NCBI Taxonomy" id="523850"/>
    <lineage>
        <taxon>Archaea</taxon>
        <taxon>Methanobacteriati</taxon>
        <taxon>Methanobacteriota</taxon>
        <taxon>Thermococci</taxon>
        <taxon>Thermococcales</taxon>
        <taxon>Thermococcaceae</taxon>
        <taxon>Thermococcus</taxon>
    </lineage>
</organism>
<keyword id="KW-0119">Carbohydrate metabolism</keyword>
<keyword id="KW-0312">Gluconeogenesis</keyword>
<keyword id="KW-0378">Hydrolase</keyword>
<keyword id="KW-0456">Lyase</keyword>
<keyword id="KW-0460">Magnesium</keyword>
<keyword id="KW-0479">Metal-binding</keyword>
<keyword id="KW-0704">Schiff base</keyword>
<gene>
    <name evidence="2" type="primary">fbp</name>
    <name evidence="4" type="ordered locus">TON_1497</name>
</gene>
<dbReference type="EC" id="3.1.3.11" evidence="2 3"/>
<dbReference type="EC" id="4.1.2.13" evidence="2"/>
<dbReference type="EMBL" id="CP000855">
    <property type="protein sequence ID" value="ACJ16987.1"/>
    <property type="molecule type" value="Genomic_DNA"/>
</dbReference>
<dbReference type="RefSeq" id="WP_012572459.1">
    <property type="nucleotide sequence ID" value="NC_011529.1"/>
</dbReference>
<dbReference type="SMR" id="B6YTP6"/>
<dbReference type="STRING" id="523850.TON_1497"/>
<dbReference type="GeneID" id="7018533"/>
<dbReference type="KEGG" id="ton:TON_1497"/>
<dbReference type="PATRIC" id="fig|523850.10.peg.1509"/>
<dbReference type="eggNOG" id="arCOG04180">
    <property type="taxonomic scope" value="Archaea"/>
</dbReference>
<dbReference type="HOGENOM" id="CLU_041630_0_0_2"/>
<dbReference type="OrthoDB" id="5829at2157"/>
<dbReference type="UniPathway" id="UPA00138"/>
<dbReference type="Proteomes" id="UP000002727">
    <property type="component" value="Chromosome"/>
</dbReference>
<dbReference type="GO" id="GO:0042132">
    <property type="term" value="F:fructose 1,6-bisphosphate 1-phosphatase activity"/>
    <property type="evidence" value="ECO:0007669"/>
    <property type="project" value="UniProtKB-UniRule"/>
</dbReference>
<dbReference type="GO" id="GO:0004332">
    <property type="term" value="F:fructose-bisphosphate aldolase activity"/>
    <property type="evidence" value="ECO:0007669"/>
    <property type="project" value="UniProtKB-UniRule"/>
</dbReference>
<dbReference type="GO" id="GO:0000287">
    <property type="term" value="F:magnesium ion binding"/>
    <property type="evidence" value="ECO:0007669"/>
    <property type="project" value="UniProtKB-UniRule"/>
</dbReference>
<dbReference type="GO" id="GO:0006094">
    <property type="term" value="P:gluconeogenesis"/>
    <property type="evidence" value="ECO:0007669"/>
    <property type="project" value="UniProtKB-UniRule"/>
</dbReference>
<dbReference type="HAMAP" id="MF_02067">
    <property type="entry name" value="FBP_aldolase_phosphatase"/>
    <property type="match status" value="1"/>
</dbReference>
<dbReference type="InterPro" id="IPR002803">
    <property type="entry name" value="FBPase_V"/>
</dbReference>
<dbReference type="InterPro" id="IPR036076">
    <property type="entry name" value="FBPase_V_sf"/>
</dbReference>
<dbReference type="NCBIfam" id="NF041126">
    <property type="entry name" value="FBP_aldo_phos"/>
    <property type="match status" value="1"/>
</dbReference>
<dbReference type="PANTHER" id="PTHR38341">
    <property type="entry name" value="FRUCTOSE-1,6-BISPHOSPHATE ALDOLASE/PHOSPHATASE"/>
    <property type="match status" value="1"/>
</dbReference>
<dbReference type="PANTHER" id="PTHR38341:SF1">
    <property type="entry name" value="FRUCTOSE-1,6-BISPHOSPHATE ALDOLASE_PHOSPHATASE"/>
    <property type="match status" value="1"/>
</dbReference>
<dbReference type="Pfam" id="PF01950">
    <property type="entry name" value="FBPase_3"/>
    <property type="match status" value="1"/>
</dbReference>
<dbReference type="PIRSF" id="PIRSF015647">
    <property type="entry name" value="FBPtase_archl"/>
    <property type="match status" value="1"/>
</dbReference>
<dbReference type="SUPFAM" id="SSF111249">
    <property type="entry name" value="Sulfolobus fructose-1,6-bisphosphatase-like"/>
    <property type="match status" value="1"/>
</dbReference>